<reference key="1">
    <citation type="journal article" date="2009" name="BMC Genomics">
        <title>Pseudogene accumulation in the evolutionary histories of Salmonella enterica serovars Paratyphi A and Typhi.</title>
        <authorList>
            <person name="Holt K.E."/>
            <person name="Thomson N.R."/>
            <person name="Wain J."/>
            <person name="Langridge G.C."/>
            <person name="Hasan R."/>
            <person name="Bhutta Z.A."/>
            <person name="Quail M.A."/>
            <person name="Norbertczak H."/>
            <person name="Walker D."/>
            <person name="Simmonds M."/>
            <person name="White B."/>
            <person name="Bason N."/>
            <person name="Mungall K."/>
            <person name="Dougan G."/>
            <person name="Parkhill J."/>
        </authorList>
    </citation>
    <scope>NUCLEOTIDE SEQUENCE [LARGE SCALE GENOMIC DNA]</scope>
    <source>
        <strain>AKU_12601</strain>
    </source>
</reference>
<sequence>MTTNTHTLQIEEILELLPHRFPFLLVDRVLDFEEGRFLRAVKNVSVNEPFFQGHFPGKPILPGVLILEAMAQATGILAFKSVGKLEPGELYYFAGIDEARFKRPVVPGDQMIMEVTFEKTRRGLTRFKGVALVDGKVVCEATMMCARSREA</sequence>
<evidence type="ECO:0000255" key="1">
    <source>
        <dbReference type="HAMAP-Rule" id="MF_00406"/>
    </source>
</evidence>
<keyword id="KW-0963">Cytoplasm</keyword>
<keyword id="KW-0441">Lipid A biosynthesis</keyword>
<keyword id="KW-0444">Lipid biosynthesis</keyword>
<keyword id="KW-0443">Lipid metabolism</keyword>
<keyword id="KW-0456">Lyase</keyword>
<feature type="chain" id="PRO_1000123664" description="3-hydroxyacyl-[acyl-carrier-protein] dehydratase FabZ">
    <location>
        <begin position="1"/>
        <end position="151"/>
    </location>
</feature>
<feature type="active site" evidence="1">
    <location>
        <position position="54"/>
    </location>
</feature>
<accession>B5BAN7</accession>
<organism>
    <name type="scientific">Salmonella paratyphi A (strain AKU_12601)</name>
    <dbReference type="NCBI Taxonomy" id="554290"/>
    <lineage>
        <taxon>Bacteria</taxon>
        <taxon>Pseudomonadati</taxon>
        <taxon>Pseudomonadota</taxon>
        <taxon>Gammaproteobacteria</taxon>
        <taxon>Enterobacterales</taxon>
        <taxon>Enterobacteriaceae</taxon>
        <taxon>Salmonella</taxon>
    </lineage>
</organism>
<gene>
    <name evidence="1" type="primary">fabZ</name>
    <name type="ordered locus">SSPA0226</name>
</gene>
<name>FABZ_SALPK</name>
<protein>
    <recommendedName>
        <fullName evidence="1">3-hydroxyacyl-[acyl-carrier-protein] dehydratase FabZ</fullName>
        <ecNumber evidence="1">4.2.1.59</ecNumber>
    </recommendedName>
    <alternativeName>
        <fullName evidence="1">(3R)-hydroxymyristoyl-[acyl-carrier-protein] dehydratase</fullName>
        <shortName evidence="1">(3R)-hydroxymyristoyl-ACP dehydrase</shortName>
    </alternativeName>
    <alternativeName>
        <fullName evidence="1">Beta-hydroxyacyl-ACP dehydratase</fullName>
    </alternativeName>
</protein>
<comment type="function">
    <text evidence="1">Involved in unsaturated fatty acids biosynthesis. Catalyzes the dehydration of short chain beta-hydroxyacyl-ACPs and long chain saturated and unsaturated beta-hydroxyacyl-ACPs.</text>
</comment>
<comment type="catalytic activity">
    <reaction evidence="1">
        <text>a (3R)-hydroxyacyl-[ACP] = a (2E)-enoyl-[ACP] + H2O</text>
        <dbReference type="Rhea" id="RHEA:13097"/>
        <dbReference type="Rhea" id="RHEA-COMP:9925"/>
        <dbReference type="Rhea" id="RHEA-COMP:9945"/>
        <dbReference type="ChEBI" id="CHEBI:15377"/>
        <dbReference type="ChEBI" id="CHEBI:78784"/>
        <dbReference type="ChEBI" id="CHEBI:78827"/>
        <dbReference type="EC" id="4.2.1.59"/>
    </reaction>
</comment>
<comment type="subcellular location">
    <subcellularLocation>
        <location evidence="1">Cytoplasm</location>
    </subcellularLocation>
</comment>
<comment type="similarity">
    <text evidence="1">Belongs to the thioester dehydratase family. FabZ subfamily.</text>
</comment>
<proteinExistence type="inferred from homology"/>
<dbReference type="EC" id="4.2.1.59" evidence="1"/>
<dbReference type="EMBL" id="FM200053">
    <property type="protein sequence ID" value="CAR58340.1"/>
    <property type="molecule type" value="Genomic_DNA"/>
</dbReference>
<dbReference type="RefSeq" id="WP_000210741.1">
    <property type="nucleotide sequence ID" value="NC_011147.1"/>
</dbReference>
<dbReference type="SMR" id="B5BAN7"/>
<dbReference type="GeneID" id="66754751"/>
<dbReference type="KEGG" id="sek:SSPA0226"/>
<dbReference type="HOGENOM" id="CLU_078912_1_0_6"/>
<dbReference type="Proteomes" id="UP000001869">
    <property type="component" value="Chromosome"/>
</dbReference>
<dbReference type="GO" id="GO:0005737">
    <property type="term" value="C:cytoplasm"/>
    <property type="evidence" value="ECO:0007669"/>
    <property type="project" value="UniProtKB-SubCell"/>
</dbReference>
<dbReference type="GO" id="GO:0016020">
    <property type="term" value="C:membrane"/>
    <property type="evidence" value="ECO:0007669"/>
    <property type="project" value="GOC"/>
</dbReference>
<dbReference type="GO" id="GO:0019171">
    <property type="term" value="F:(3R)-hydroxyacyl-[acyl-carrier-protein] dehydratase activity"/>
    <property type="evidence" value="ECO:0007669"/>
    <property type="project" value="UniProtKB-EC"/>
</dbReference>
<dbReference type="GO" id="GO:0006633">
    <property type="term" value="P:fatty acid biosynthetic process"/>
    <property type="evidence" value="ECO:0007669"/>
    <property type="project" value="UniProtKB-UniRule"/>
</dbReference>
<dbReference type="GO" id="GO:0009245">
    <property type="term" value="P:lipid A biosynthetic process"/>
    <property type="evidence" value="ECO:0007669"/>
    <property type="project" value="UniProtKB-UniRule"/>
</dbReference>
<dbReference type="CDD" id="cd01288">
    <property type="entry name" value="FabZ"/>
    <property type="match status" value="1"/>
</dbReference>
<dbReference type="FunFam" id="3.10.129.10:FF:000001">
    <property type="entry name" value="3-hydroxyacyl-[acyl-carrier-protein] dehydratase FabZ"/>
    <property type="match status" value="1"/>
</dbReference>
<dbReference type="Gene3D" id="3.10.129.10">
    <property type="entry name" value="Hotdog Thioesterase"/>
    <property type="match status" value="1"/>
</dbReference>
<dbReference type="HAMAP" id="MF_00406">
    <property type="entry name" value="FabZ"/>
    <property type="match status" value="1"/>
</dbReference>
<dbReference type="InterPro" id="IPR013114">
    <property type="entry name" value="FabA_FabZ"/>
</dbReference>
<dbReference type="InterPro" id="IPR010084">
    <property type="entry name" value="FabZ"/>
</dbReference>
<dbReference type="InterPro" id="IPR029069">
    <property type="entry name" value="HotDog_dom_sf"/>
</dbReference>
<dbReference type="NCBIfam" id="TIGR01750">
    <property type="entry name" value="fabZ"/>
    <property type="match status" value="1"/>
</dbReference>
<dbReference type="NCBIfam" id="NF000582">
    <property type="entry name" value="PRK00006.1"/>
    <property type="match status" value="1"/>
</dbReference>
<dbReference type="PANTHER" id="PTHR30272">
    <property type="entry name" value="3-HYDROXYACYL-[ACYL-CARRIER-PROTEIN] DEHYDRATASE"/>
    <property type="match status" value="1"/>
</dbReference>
<dbReference type="PANTHER" id="PTHR30272:SF1">
    <property type="entry name" value="3-HYDROXYACYL-[ACYL-CARRIER-PROTEIN] DEHYDRATASE"/>
    <property type="match status" value="1"/>
</dbReference>
<dbReference type="Pfam" id="PF07977">
    <property type="entry name" value="FabA"/>
    <property type="match status" value="1"/>
</dbReference>
<dbReference type="SUPFAM" id="SSF54637">
    <property type="entry name" value="Thioesterase/thiol ester dehydrase-isomerase"/>
    <property type="match status" value="1"/>
</dbReference>